<gene>
    <name type="ordered locus">BCG9842_B3730</name>
</gene>
<feature type="chain" id="PRO_1000200769" description="UPF0398 protein BCG9842_B3730">
    <location>
        <begin position="1"/>
        <end position="184"/>
    </location>
</feature>
<reference key="1">
    <citation type="submission" date="2008-10" db="EMBL/GenBank/DDBJ databases">
        <title>Genome sequence of Bacillus cereus G9842.</title>
        <authorList>
            <person name="Dodson R.J."/>
            <person name="Durkin A.S."/>
            <person name="Rosovitz M.J."/>
            <person name="Rasko D.A."/>
            <person name="Hoffmaster A."/>
            <person name="Ravel J."/>
            <person name="Sutton G."/>
        </authorList>
    </citation>
    <scope>NUCLEOTIDE SEQUENCE [LARGE SCALE GENOMIC DNA]</scope>
    <source>
        <strain>G9842</strain>
    </source>
</reference>
<sequence>MKVIAVTGYKPFELGIFKNDHPGVGCIKKALHRKLTTFVEDGLEWVIISGQLGVELWAAEVVFEIQVEYPDLKLAVFTPFLEQEENWKEDNREYYEFILSQADHVDSITKRKYESPEQFKLKNQFFIEKSDALLAVYDEEKPGSPKYIVETAKKKGEIENYHSYFILFSELQDIIEEEQWNNAE</sequence>
<organism>
    <name type="scientific">Bacillus cereus (strain G9842)</name>
    <dbReference type="NCBI Taxonomy" id="405531"/>
    <lineage>
        <taxon>Bacteria</taxon>
        <taxon>Bacillati</taxon>
        <taxon>Bacillota</taxon>
        <taxon>Bacilli</taxon>
        <taxon>Bacillales</taxon>
        <taxon>Bacillaceae</taxon>
        <taxon>Bacillus</taxon>
        <taxon>Bacillus cereus group</taxon>
    </lineage>
</organism>
<dbReference type="EMBL" id="CP001186">
    <property type="protein sequence ID" value="ACK93040.1"/>
    <property type="molecule type" value="Genomic_DNA"/>
</dbReference>
<dbReference type="RefSeq" id="WP_000862927.1">
    <property type="nucleotide sequence ID" value="NC_011772.1"/>
</dbReference>
<dbReference type="SMR" id="B7IPD7"/>
<dbReference type="KEGG" id="bcg:BCG9842_B3730"/>
<dbReference type="HOGENOM" id="CLU_105319_0_0_9"/>
<dbReference type="Proteomes" id="UP000006744">
    <property type="component" value="Chromosome"/>
</dbReference>
<dbReference type="Gene3D" id="3.40.50.450">
    <property type="match status" value="1"/>
</dbReference>
<dbReference type="HAMAP" id="MF_01575">
    <property type="entry name" value="UPF0398"/>
    <property type="match status" value="1"/>
</dbReference>
<dbReference type="InterPro" id="IPR010697">
    <property type="entry name" value="YspA"/>
</dbReference>
<dbReference type="NCBIfam" id="NF010181">
    <property type="entry name" value="PRK13660.1"/>
    <property type="match status" value="1"/>
</dbReference>
<dbReference type="PANTHER" id="PTHR38440:SF1">
    <property type="entry name" value="UPF0398 PROTEIN SPR0331"/>
    <property type="match status" value="1"/>
</dbReference>
<dbReference type="PANTHER" id="PTHR38440">
    <property type="entry name" value="UPF0398 PROTEIN YPSA"/>
    <property type="match status" value="1"/>
</dbReference>
<dbReference type="Pfam" id="PF06908">
    <property type="entry name" value="YpsA"/>
    <property type="match status" value="1"/>
</dbReference>
<dbReference type="PIRSF" id="PIRSF021290">
    <property type="entry name" value="DUF1273"/>
    <property type="match status" value="1"/>
</dbReference>
<dbReference type="SUPFAM" id="SSF102405">
    <property type="entry name" value="MCP/YpsA-like"/>
    <property type="match status" value="1"/>
</dbReference>
<accession>B7IPD7</accession>
<protein>
    <recommendedName>
        <fullName evidence="1">UPF0398 protein BCG9842_B3730</fullName>
    </recommendedName>
</protein>
<comment type="similarity">
    <text evidence="1">Belongs to the UPF0398 family.</text>
</comment>
<proteinExistence type="inferred from homology"/>
<name>Y3730_BACC2</name>
<evidence type="ECO:0000255" key="1">
    <source>
        <dbReference type="HAMAP-Rule" id="MF_01575"/>
    </source>
</evidence>